<sequence>MLQQESRVRVADNSGAREILVIRVLGGSVKRSAGIGDVVVATVKEAAPGGTVKENEIVRAVIVRTKKPTRRPDGSYIAFDENAAVIIKANDNDPRGTRIFGPVARELREKKFMKIVSLAPEVL</sequence>
<protein>
    <recommendedName>
        <fullName evidence="1">Large ribosomal subunit protein uL14</fullName>
    </recommendedName>
    <alternativeName>
        <fullName evidence="2">50S ribosomal protein L14</fullName>
    </alternativeName>
</protein>
<accession>B1VEW4</accession>
<reference key="1">
    <citation type="journal article" date="2008" name="J. Biotechnol.">
        <title>The lifestyle of Corynebacterium urealyticum derived from its complete genome sequence established by pyrosequencing.</title>
        <authorList>
            <person name="Tauch A."/>
            <person name="Trost E."/>
            <person name="Tilker A."/>
            <person name="Ludewig U."/>
            <person name="Schneiker S."/>
            <person name="Goesmann A."/>
            <person name="Arnold W."/>
            <person name="Bekel T."/>
            <person name="Brinkrolf K."/>
            <person name="Brune I."/>
            <person name="Goetker S."/>
            <person name="Kalinowski J."/>
            <person name="Kamp P.-B."/>
            <person name="Lobo F.P."/>
            <person name="Viehoever P."/>
            <person name="Weisshaar B."/>
            <person name="Soriano F."/>
            <person name="Droege M."/>
            <person name="Puehler A."/>
        </authorList>
    </citation>
    <scope>NUCLEOTIDE SEQUENCE [LARGE SCALE GENOMIC DNA]</scope>
    <source>
        <strain>ATCC 43042 / DSM 7109</strain>
    </source>
</reference>
<gene>
    <name evidence="1" type="primary">rplN</name>
    <name type="ordered locus">cu0343</name>
</gene>
<comment type="function">
    <text evidence="1">Binds to 23S rRNA. Forms part of two intersubunit bridges in the 70S ribosome.</text>
</comment>
<comment type="subunit">
    <text evidence="1">Part of the 50S ribosomal subunit. Forms a cluster with proteins L3 and L19. In the 70S ribosome, L14 and L19 interact and together make contacts with the 16S rRNA in bridges B5 and B8.</text>
</comment>
<comment type="similarity">
    <text evidence="1">Belongs to the universal ribosomal protein uL14 family.</text>
</comment>
<evidence type="ECO:0000255" key="1">
    <source>
        <dbReference type="HAMAP-Rule" id="MF_01367"/>
    </source>
</evidence>
<evidence type="ECO:0000305" key="2"/>
<proteinExistence type="inferred from homology"/>
<organism>
    <name type="scientific">Corynebacterium urealyticum (strain ATCC 43042 / DSM 7109)</name>
    <dbReference type="NCBI Taxonomy" id="504474"/>
    <lineage>
        <taxon>Bacteria</taxon>
        <taxon>Bacillati</taxon>
        <taxon>Actinomycetota</taxon>
        <taxon>Actinomycetes</taxon>
        <taxon>Mycobacteriales</taxon>
        <taxon>Corynebacteriaceae</taxon>
        <taxon>Corynebacterium</taxon>
    </lineage>
</organism>
<feature type="chain" id="PRO_1000144249" description="Large ribosomal subunit protein uL14">
    <location>
        <begin position="1"/>
        <end position="123"/>
    </location>
</feature>
<dbReference type="EMBL" id="AM942444">
    <property type="protein sequence ID" value="CAQ04303.1"/>
    <property type="molecule type" value="Genomic_DNA"/>
</dbReference>
<dbReference type="RefSeq" id="WP_012359596.1">
    <property type="nucleotide sequence ID" value="NC_010545.1"/>
</dbReference>
<dbReference type="SMR" id="B1VEW4"/>
<dbReference type="STRING" id="504474.cu0343"/>
<dbReference type="GeneID" id="60605146"/>
<dbReference type="KEGG" id="cur:cu0343"/>
<dbReference type="eggNOG" id="COG0093">
    <property type="taxonomic scope" value="Bacteria"/>
</dbReference>
<dbReference type="HOGENOM" id="CLU_095071_2_1_11"/>
<dbReference type="Proteomes" id="UP000001727">
    <property type="component" value="Chromosome"/>
</dbReference>
<dbReference type="GO" id="GO:0022625">
    <property type="term" value="C:cytosolic large ribosomal subunit"/>
    <property type="evidence" value="ECO:0007669"/>
    <property type="project" value="TreeGrafter"/>
</dbReference>
<dbReference type="GO" id="GO:0070180">
    <property type="term" value="F:large ribosomal subunit rRNA binding"/>
    <property type="evidence" value="ECO:0007669"/>
    <property type="project" value="TreeGrafter"/>
</dbReference>
<dbReference type="GO" id="GO:0003735">
    <property type="term" value="F:structural constituent of ribosome"/>
    <property type="evidence" value="ECO:0007669"/>
    <property type="project" value="InterPro"/>
</dbReference>
<dbReference type="GO" id="GO:0006412">
    <property type="term" value="P:translation"/>
    <property type="evidence" value="ECO:0007669"/>
    <property type="project" value="UniProtKB-UniRule"/>
</dbReference>
<dbReference type="CDD" id="cd00337">
    <property type="entry name" value="Ribosomal_uL14"/>
    <property type="match status" value="1"/>
</dbReference>
<dbReference type="FunFam" id="2.40.150.20:FF:000001">
    <property type="entry name" value="50S ribosomal protein L14"/>
    <property type="match status" value="1"/>
</dbReference>
<dbReference type="Gene3D" id="2.40.150.20">
    <property type="entry name" value="Ribosomal protein L14"/>
    <property type="match status" value="1"/>
</dbReference>
<dbReference type="HAMAP" id="MF_01367">
    <property type="entry name" value="Ribosomal_uL14"/>
    <property type="match status" value="1"/>
</dbReference>
<dbReference type="InterPro" id="IPR000218">
    <property type="entry name" value="Ribosomal_uL14"/>
</dbReference>
<dbReference type="InterPro" id="IPR005745">
    <property type="entry name" value="Ribosomal_uL14_bac-type"/>
</dbReference>
<dbReference type="InterPro" id="IPR019972">
    <property type="entry name" value="Ribosomal_uL14_CS"/>
</dbReference>
<dbReference type="InterPro" id="IPR036853">
    <property type="entry name" value="Ribosomal_uL14_sf"/>
</dbReference>
<dbReference type="NCBIfam" id="TIGR01067">
    <property type="entry name" value="rplN_bact"/>
    <property type="match status" value="1"/>
</dbReference>
<dbReference type="PANTHER" id="PTHR11761">
    <property type="entry name" value="50S/60S RIBOSOMAL PROTEIN L14/L23"/>
    <property type="match status" value="1"/>
</dbReference>
<dbReference type="PANTHER" id="PTHR11761:SF3">
    <property type="entry name" value="LARGE RIBOSOMAL SUBUNIT PROTEIN UL14M"/>
    <property type="match status" value="1"/>
</dbReference>
<dbReference type="Pfam" id="PF00238">
    <property type="entry name" value="Ribosomal_L14"/>
    <property type="match status" value="1"/>
</dbReference>
<dbReference type="SMART" id="SM01374">
    <property type="entry name" value="Ribosomal_L14"/>
    <property type="match status" value="1"/>
</dbReference>
<dbReference type="SUPFAM" id="SSF50193">
    <property type="entry name" value="Ribosomal protein L14"/>
    <property type="match status" value="1"/>
</dbReference>
<dbReference type="PROSITE" id="PS00049">
    <property type="entry name" value="RIBOSOMAL_L14"/>
    <property type="match status" value="1"/>
</dbReference>
<keyword id="KW-1185">Reference proteome</keyword>
<keyword id="KW-0687">Ribonucleoprotein</keyword>
<keyword id="KW-0689">Ribosomal protein</keyword>
<keyword id="KW-0694">RNA-binding</keyword>
<keyword id="KW-0699">rRNA-binding</keyword>
<name>RL14_CORU7</name>